<feature type="chain" id="PRO_0000352232" description="NAD(P)H-quinone oxidoreductase subunit N">
    <location>
        <begin position="1"/>
        <end position="150"/>
    </location>
</feature>
<feature type="helix" evidence="3">
    <location>
        <begin position="8"/>
        <end position="16"/>
    </location>
</feature>
<feature type="strand" evidence="3">
    <location>
        <begin position="17"/>
        <end position="22"/>
    </location>
</feature>
<feature type="strand" evidence="4">
    <location>
        <begin position="28"/>
        <end position="30"/>
    </location>
</feature>
<feature type="helix" evidence="3">
    <location>
        <begin position="31"/>
        <end position="38"/>
    </location>
</feature>
<feature type="turn" evidence="3">
    <location>
        <begin position="39"/>
        <end position="41"/>
    </location>
</feature>
<feature type="strand" evidence="3">
    <location>
        <begin position="43"/>
        <end position="47"/>
    </location>
</feature>
<feature type="helix" evidence="3">
    <location>
        <begin position="49"/>
        <end position="51"/>
    </location>
</feature>
<feature type="helix" evidence="3">
    <location>
        <begin position="55"/>
        <end position="58"/>
    </location>
</feature>
<feature type="strand" evidence="4">
    <location>
        <begin position="63"/>
        <end position="65"/>
    </location>
</feature>
<feature type="strand" evidence="3">
    <location>
        <begin position="71"/>
        <end position="73"/>
    </location>
</feature>
<feature type="strand" evidence="4">
    <location>
        <begin position="78"/>
        <end position="80"/>
    </location>
</feature>
<feature type="helix" evidence="3">
    <location>
        <begin position="83"/>
        <end position="89"/>
    </location>
</feature>
<feature type="strand" evidence="4">
    <location>
        <begin position="93"/>
        <end position="95"/>
    </location>
</feature>
<feature type="strand" evidence="3">
    <location>
        <begin position="98"/>
        <end position="103"/>
    </location>
</feature>
<feature type="helix" evidence="4">
    <location>
        <begin position="105"/>
        <end position="107"/>
    </location>
</feature>
<feature type="helix" evidence="3">
    <location>
        <begin position="110"/>
        <end position="122"/>
    </location>
</feature>
<feature type="strand" evidence="3">
    <location>
        <begin position="123"/>
        <end position="128"/>
    </location>
</feature>
<feature type="strand" evidence="3">
    <location>
        <begin position="139"/>
        <end position="142"/>
    </location>
</feature>
<feature type="helix" evidence="3">
    <location>
        <begin position="143"/>
        <end position="146"/>
    </location>
</feature>
<name>NDHN_THEVB</name>
<gene>
    <name type="primary">ndhN</name>
    <name type="ordered locus">tlr1130</name>
</gene>
<evidence type="ECO:0000250" key="1"/>
<evidence type="ECO:0000305" key="2"/>
<evidence type="ECO:0007829" key="3">
    <source>
        <dbReference type="PDB" id="6KHI"/>
    </source>
</evidence>
<evidence type="ECO:0007829" key="4">
    <source>
        <dbReference type="PDB" id="6NBQ"/>
    </source>
</evidence>
<comment type="function">
    <text evidence="1">NDH-1 shuttles electrons from an unknown electron donor, via FMN and iron-sulfur (Fe-S) centers, to quinones in the respiratory and/or the photosynthetic chain. The immediate electron acceptor for the enzyme in this species is believed to be plastoquinone. Couples the redox reaction to proton translocation, and thus conserves the redox energy in a proton gradient. Cyanobacterial NDH-1 also plays a role in inorganic carbon-concentration (By similarity).</text>
</comment>
<comment type="catalytic activity">
    <reaction>
        <text>a plastoquinone + NADH + (n+1) H(+)(in) = a plastoquinol + NAD(+) + n H(+)(out)</text>
        <dbReference type="Rhea" id="RHEA:42608"/>
        <dbReference type="Rhea" id="RHEA-COMP:9561"/>
        <dbReference type="Rhea" id="RHEA-COMP:9562"/>
        <dbReference type="ChEBI" id="CHEBI:15378"/>
        <dbReference type="ChEBI" id="CHEBI:17757"/>
        <dbReference type="ChEBI" id="CHEBI:57540"/>
        <dbReference type="ChEBI" id="CHEBI:57945"/>
        <dbReference type="ChEBI" id="CHEBI:62192"/>
    </reaction>
</comment>
<comment type="catalytic activity">
    <reaction>
        <text>a plastoquinone + NADPH + (n+1) H(+)(in) = a plastoquinol + NADP(+) + n H(+)(out)</text>
        <dbReference type="Rhea" id="RHEA:42612"/>
        <dbReference type="Rhea" id="RHEA-COMP:9561"/>
        <dbReference type="Rhea" id="RHEA-COMP:9562"/>
        <dbReference type="ChEBI" id="CHEBI:15378"/>
        <dbReference type="ChEBI" id="CHEBI:17757"/>
        <dbReference type="ChEBI" id="CHEBI:57783"/>
        <dbReference type="ChEBI" id="CHEBI:58349"/>
        <dbReference type="ChEBI" id="CHEBI:62192"/>
    </reaction>
</comment>
<comment type="subunit">
    <text>NDH-1 can be composed of about 15 different subunits; different subcomplexes with different compositions have been identified which probably have different functions.</text>
</comment>
<comment type="subcellular location">
    <subcellularLocation>
        <location evidence="2">Cellular thylakoid membrane</location>
        <topology evidence="2">Peripheral membrane protein</topology>
        <orientation evidence="2">Cytoplasmic side</orientation>
    </subcellularLocation>
</comment>
<comment type="similarity">
    <text evidence="2">Belongs to the complex I NdhN subunit family.</text>
</comment>
<organism>
    <name type="scientific">Thermosynechococcus vestitus (strain NIES-2133 / IAM M-273 / BP-1)</name>
    <dbReference type="NCBI Taxonomy" id="197221"/>
    <lineage>
        <taxon>Bacteria</taxon>
        <taxon>Bacillati</taxon>
        <taxon>Cyanobacteriota</taxon>
        <taxon>Cyanophyceae</taxon>
        <taxon>Acaryochloridales</taxon>
        <taxon>Thermosynechococcaceae</taxon>
        <taxon>Thermosynechococcus</taxon>
    </lineage>
</organism>
<accession>Q8DJU2</accession>
<keyword id="KW-0002">3D-structure</keyword>
<keyword id="KW-0472">Membrane</keyword>
<keyword id="KW-0520">NAD</keyword>
<keyword id="KW-0521">NADP</keyword>
<keyword id="KW-0618">Plastoquinone</keyword>
<keyword id="KW-0874">Quinone</keyword>
<keyword id="KW-1185">Reference proteome</keyword>
<keyword id="KW-0793">Thylakoid</keyword>
<keyword id="KW-1278">Translocase</keyword>
<keyword id="KW-0813">Transport</keyword>
<proteinExistence type="evidence at protein level"/>
<reference key="1">
    <citation type="journal article" date="2002" name="DNA Res.">
        <title>Complete genome structure of the thermophilic cyanobacterium Thermosynechococcus elongatus BP-1.</title>
        <authorList>
            <person name="Nakamura Y."/>
            <person name="Kaneko T."/>
            <person name="Sato S."/>
            <person name="Ikeuchi M."/>
            <person name="Katoh H."/>
            <person name="Sasamoto S."/>
            <person name="Watanabe A."/>
            <person name="Iriguchi M."/>
            <person name="Kawashima K."/>
            <person name="Kimura T."/>
            <person name="Kishida Y."/>
            <person name="Kiyokawa C."/>
            <person name="Kohara M."/>
            <person name="Matsumoto M."/>
            <person name="Matsuno A."/>
            <person name="Nakazaki N."/>
            <person name="Shimpo S."/>
            <person name="Sugimoto M."/>
            <person name="Takeuchi C."/>
            <person name="Yamada M."/>
            <person name="Tabata S."/>
        </authorList>
    </citation>
    <scope>NUCLEOTIDE SEQUENCE [LARGE SCALE GENOMIC DNA]</scope>
    <source>
        <strain>NIES-2133 / IAM M-273 / BP-1</strain>
    </source>
</reference>
<reference key="2">
    <citation type="journal article" date="2005" name="Biochem. J.">
        <title>Isolation, subunit composition and interaction of the NDH-1 complexes from Thermosynechococcus elongatus BP-1.</title>
        <authorList>
            <person name="Zhang P."/>
            <person name="Battchikova N."/>
            <person name="Paakkarinen V."/>
            <person name="Katoh H."/>
            <person name="Iwai M."/>
            <person name="Ikeuchi M."/>
            <person name="Pakrasi H.B."/>
            <person name="Ogawa T."/>
            <person name="Aro E.-M."/>
        </authorList>
    </citation>
    <scope>IDENTIFICATION BY MASS SPECTROMETRY</scope>
    <scope>CHARACTERIZATION AS A MEMBER OF THE NAD(P)H-QUINONE OXIDOREDUCTASE COMPLEX</scope>
    <scope>SUBCOMPLEXES OF NDH-1</scope>
</reference>
<sequence>MGLLAGYQFVKDLESAGALALFVPPEGGFEGRYQRRLRSKGYTTLPMSAPGLGDLAAYLTQEHGIRPAHTGKEDIRVYFQPPLVTYHLENLPPNAKGLVLWLIDGKRLSKQEFAYLAQLTQTLPKFKVVVEVGGDRVVRWEPLADWVAAA</sequence>
<dbReference type="EC" id="7.1.1.-"/>
<dbReference type="EMBL" id="BA000039">
    <property type="protein sequence ID" value="BAC08682.1"/>
    <property type="molecule type" value="Genomic_DNA"/>
</dbReference>
<dbReference type="RefSeq" id="NP_681920.1">
    <property type="nucleotide sequence ID" value="NC_004113.1"/>
</dbReference>
<dbReference type="RefSeq" id="WP_011056972.1">
    <property type="nucleotide sequence ID" value="NC_004113.1"/>
</dbReference>
<dbReference type="PDB" id="6HUM">
    <property type="method" value="EM"/>
    <property type="resolution" value="3.34 A"/>
    <property type="chains" value="N=1-150"/>
</dbReference>
<dbReference type="PDB" id="6KHI">
    <property type="method" value="EM"/>
    <property type="resolution" value="3.00 A"/>
    <property type="chains" value="N=1-150"/>
</dbReference>
<dbReference type="PDB" id="6KHJ">
    <property type="method" value="EM"/>
    <property type="resolution" value="3.00 A"/>
    <property type="chains" value="N=1-150"/>
</dbReference>
<dbReference type="PDB" id="6L7O">
    <property type="method" value="EM"/>
    <property type="resolution" value="3.20 A"/>
    <property type="chains" value="N=1-150"/>
</dbReference>
<dbReference type="PDB" id="6L7P">
    <property type="method" value="EM"/>
    <property type="resolution" value="3.60 A"/>
    <property type="chains" value="N=1-150"/>
</dbReference>
<dbReference type="PDB" id="6NBQ">
    <property type="method" value="EM"/>
    <property type="resolution" value="3.10 A"/>
    <property type="chains" value="N=1-150"/>
</dbReference>
<dbReference type="PDB" id="6NBX">
    <property type="method" value="EM"/>
    <property type="resolution" value="3.50 A"/>
    <property type="chains" value="N=1-150"/>
</dbReference>
<dbReference type="PDB" id="6NBY">
    <property type="method" value="EM"/>
    <property type="resolution" value="3.10 A"/>
    <property type="chains" value="N=1-150"/>
</dbReference>
<dbReference type="PDB" id="6TJV">
    <property type="method" value="EM"/>
    <property type="resolution" value="3.20 A"/>
    <property type="chains" value="N=1-150"/>
</dbReference>
<dbReference type="PDBsum" id="6HUM"/>
<dbReference type="PDBsum" id="6KHI"/>
<dbReference type="PDBsum" id="6KHJ"/>
<dbReference type="PDBsum" id="6L7O"/>
<dbReference type="PDBsum" id="6L7P"/>
<dbReference type="PDBsum" id="6NBQ"/>
<dbReference type="PDBsum" id="6NBX"/>
<dbReference type="PDBsum" id="6NBY"/>
<dbReference type="PDBsum" id="6TJV"/>
<dbReference type="EMDB" id="EMD-0281"/>
<dbReference type="EMDB" id="EMD-0415"/>
<dbReference type="EMDB" id="EMD-0425"/>
<dbReference type="EMDB" id="EMD-0849"/>
<dbReference type="EMDB" id="EMD-0850"/>
<dbReference type="EMDB" id="EMD-10513"/>
<dbReference type="EMDB" id="EMD-9989"/>
<dbReference type="EMDB" id="EMD-9990"/>
<dbReference type="SMR" id="Q8DJU2"/>
<dbReference type="IntAct" id="Q8DJU2">
    <property type="interactions" value="1"/>
</dbReference>
<dbReference type="STRING" id="197221.gene:10747725"/>
<dbReference type="TCDB" id="3.D.1.8.2">
    <property type="family name" value="the h+ or na+-translocating nadh dehydrogenase (ndh) family"/>
</dbReference>
<dbReference type="EnsemblBacteria" id="BAC08682">
    <property type="protein sequence ID" value="BAC08682"/>
    <property type="gene ID" value="BAC08682"/>
</dbReference>
<dbReference type="KEGG" id="tel:tlr1130"/>
<dbReference type="PATRIC" id="fig|197221.4.peg.1186"/>
<dbReference type="eggNOG" id="ENOG502ZBMI">
    <property type="taxonomic scope" value="Bacteria"/>
</dbReference>
<dbReference type="Proteomes" id="UP000000440">
    <property type="component" value="Chromosome"/>
</dbReference>
<dbReference type="GO" id="GO:0031676">
    <property type="term" value="C:plasma membrane-derived thylakoid membrane"/>
    <property type="evidence" value="ECO:0007669"/>
    <property type="project" value="UniProtKB-SubCell"/>
</dbReference>
<dbReference type="GO" id="GO:0016655">
    <property type="term" value="F:oxidoreductase activity, acting on NAD(P)H, quinone or similar compound as acceptor"/>
    <property type="evidence" value="ECO:0007669"/>
    <property type="project" value="UniProtKB-UniRule"/>
</dbReference>
<dbReference type="GO" id="GO:0048038">
    <property type="term" value="F:quinone binding"/>
    <property type="evidence" value="ECO:0007669"/>
    <property type="project" value="UniProtKB-KW"/>
</dbReference>
<dbReference type="HAMAP" id="MF_01353">
    <property type="entry name" value="NDH1_NDH1N"/>
    <property type="match status" value="1"/>
</dbReference>
<dbReference type="InterPro" id="IPR020874">
    <property type="entry name" value="NAD(P)H-quinone_OxRdtase_su_N"/>
</dbReference>
<dbReference type="PANTHER" id="PTHR35515">
    <property type="entry name" value="NAD(P)H-QUINONE OXIDOREDUCTASE SUBUNIT N, CHLOROPLASTIC"/>
    <property type="match status" value="1"/>
</dbReference>
<dbReference type="PANTHER" id="PTHR35515:SF1">
    <property type="entry name" value="NAD(P)H-QUINONE OXIDOREDUCTASE SUBUNIT N, CHLOROPLASTIC"/>
    <property type="match status" value="1"/>
</dbReference>
<dbReference type="Pfam" id="PF11909">
    <property type="entry name" value="NdhN"/>
    <property type="match status" value="1"/>
</dbReference>
<protein>
    <recommendedName>
        <fullName>NAD(P)H-quinone oxidoreductase subunit N</fullName>
        <ecNumber>7.1.1.-</ecNumber>
    </recommendedName>
    <alternativeName>
        <fullName>NAD(P)H dehydrogenase I subunit N</fullName>
        <shortName>NDH-1 subunit N</shortName>
        <shortName>NDH-N</shortName>
    </alternativeName>
</protein>